<evidence type="ECO:0000255" key="1">
    <source>
        <dbReference type="HAMAP-Rule" id="MF_01851"/>
    </source>
</evidence>
<protein>
    <recommendedName>
        <fullName evidence="1">UPF0637 protein LEUM_0496</fullName>
    </recommendedName>
</protein>
<sequence length="197" mass="23161">MFRNSDFDIFEDKTLNGRMEKIRTIIDPKFEEFASIALPILNTNGQEWYAHVAKHLRRTTYAPDNTWVAFAPNKRGYKMLPHFELGIWEDNVYFYLAVEENMKPDQTNVITQKLREVSPLVRELPDSYRLSQDHMVNKTYSLLQYDDSIERYESVKHSEVLIGVEIKRGDKLWDGDGIVDTLVLAMKNLLPIYEKIK</sequence>
<feature type="chain" id="PRO_0000348312" description="UPF0637 protein LEUM_0496">
    <location>
        <begin position="1"/>
        <end position="197"/>
    </location>
</feature>
<accession>Q03YW0</accession>
<reference key="1">
    <citation type="journal article" date="2006" name="Proc. Natl. Acad. Sci. U.S.A.">
        <title>Comparative genomics of the lactic acid bacteria.</title>
        <authorList>
            <person name="Makarova K.S."/>
            <person name="Slesarev A."/>
            <person name="Wolf Y.I."/>
            <person name="Sorokin A."/>
            <person name="Mirkin B."/>
            <person name="Koonin E.V."/>
            <person name="Pavlov A."/>
            <person name="Pavlova N."/>
            <person name="Karamychev V."/>
            <person name="Polouchine N."/>
            <person name="Shakhova V."/>
            <person name="Grigoriev I."/>
            <person name="Lou Y."/>
            <person name="Rohksar D."/>
            <person name="Lucas S."/>
            <person name="Huang K."/>
            <person name="Goodstein D.M."/>
            <person name="Hawkins T."/>
            <person name="Plengvidhya V."/>
            <person name="Welker D."/>
            <person name="Hughes J."/>
            <person name="Goh Y."/>
            <person name="Benson A."/>
            <person name="Baldwin K."/>
            <person name="Lee J.-H."/>
            <person name="Diaz-Muniz I."/>
            <person name="Dosti B."/>
            <person name="Smeianov V."/>
            <person name="Wechter W."/>
            <person name="Barabote R."/>
            <person name="Lorca G."/>
            <person name="Altermann E."/>
            <person name="Barrangou R."/>
            <person name="Ganesan B."/>
            <person name="Xie Y."/>
            <person name="Rawsthorne H."/>
            <person name="Tamir D."/>
            <person name="Parker C."/>
            <person name="Breidt F."/>
            <person name="Broadbent J.R."/>
            <person name="Hutkins R."/>
            <person name="O'Sullivan D."/>
            <person name="Steele J."/>
            <person name="Unlu G."/>
            <person name="Saier M.H. Jr."/>
            <person name="Klaenhammer T."/>
            <person name="Richardson P."/>
            <person name="Kozyavkin S."/>
            <person name="Weimer B.C."/>
            <person name="Mills D.A."/>
        </authorList>
    </citation>
    <scope>NUCLEOTIDE SEQUENCE [LARGE SCALE GENOMIC DNA]</scope>
    <source>
        <strain>ATCC 8293 / DSM 20343 / BCRC 11652 / CCM 1803 / JCM 6124 / NCDO 523 / NBRC 100496 / NCIMB 8023 / NCTC 12954 / NRRL B-1118 / 37Y</strain>
    </source>
</reference>
<name>Y496_LEUMM</name>
<comment type="similarity">
    <text evidence="1">Belongs to the UPF0637 family.</text>
</comment>
<gene>
    <name type="ordered locus">LEUM_0496</name>
</gene>
<keyword id="KW-1185">Reference proteome</keyword>
<proteinExistence type="inferred from homology"/>
<dbReference type="EMBL" id="CP000414">
    <property type="protein sequence ID" value="ABJ61612.1"/>
    <property type="molecule type" value="Genomic_DNA"/>
</dbReference>
<dbReference type="RefSeq" id="WP_011679333.1">
    <property type="nucleotide sequence ID" value="NC_008531.1"/>
</dbReference>
<dbReference type="SMR" id="Q03YW0"/>
<dbReference type="EnsemblBacteria" id="ABJ61612">
    <property type="protein sequence ID" value="ABJ61612"/>
    <property type="gene ID" value="LEUM_0496"/>
</dbReference>
<dbReference type="GeneID" id="29575897"/>
<dbReference type="KEGG" id="lme:LEUM_0496"/>
<dbReference type="eggNOG" id="COG4493">
    <property type="taxonomic scope" value="Bacteria"/>
</dbReference>
<dbReference type="HOGENOM" id="CLU_096059_0_0_9"/>
<dbReference type="Proteomes" id="UP000000362">
    <property type="component" value="Chromosome"/>
</dbReference>
<dbReference type="Gene3D" id="3.30.930.20">
    <property type="entry name" value="Protein of unknown function DUF1054"/>
    <property type="match status" value="1"/>
</dbReference>
<dbReference type="HAMAP" id="MF_01851">
    <property type="entry name" value="UPF0637"/>
    <property type="match status" value="1"/>
</dbReference>
<dbReference type="InterPro" id="IPR009403">
    <property type="entry name" value="UPF0637"/>
</dbReference>
<dbReference type="InterPro" id="IPR053707">
    <property type="entry name" value="UPF0637_domain_sf"/>
</dbReference>
<dbReference type="Pfam" id="PF06335">
    <property type="entry name" value="DUF1054"/>
    <property type="match status" value="1"/>
</dbReference>
<dbReference type="SUPFAM" id="SSF142913">
    <property type="entry name" value="YktB/PF0168-like"/>
    <property type="match status" value="1"/>
</dbReference>
<organism>
    <name type="scientific">Leuconostoc mesenteroides subsp. mesenteroides (strain ATCC 8293 / DSM 20343 / BCRC 11652 / CCM 1803 / JCM 6124 / NCDO 523 / NBRC 100496 / NCIMB 8023 / NCTC 12954 / NRRL B-1118 / 37Y)</name>
    <dbReference type="NCBI Taxonomy" id="203120"/>
    <lineage>
        <taxon>Bacteria</taxon>
        <taxon>Bacillati</taxon>
        <taxon>Bacillota</taxon>
        <taxon>Bacilli</taxon>
        <taxon>Lactobacillales</taxon>
        <taxon>Lactobacillaceae</taxon>
        <taxon>Leuconostoc</taxon>
    </lineage>
</organism>